<evidence type="ECO:0000250" key="1"/>
<evidence type="ECO:0000255" key="2"/>
<evidence type="ECO:0000256" key="3">
    <source>
        <dbReference type="SAM" id="MobiDB-lite"/>
    </source>
</evidence>
<evidence type="ECO:0000305" key="4"/>
<sequence length="129" mass="14302">MSILLTTILLTLLTTPTLAQFGFFDQMFGGNGGQQQQQGHHHHHEQQEAQNVRSDSSWYQSQYEGAQCTHYLCPGTLSCVHFPHHCPCAWEAVEDKVELGDGIAICGSKGGWVAGEFEKKVEMARKGLL</sequence>
<accession>E3RT14</accession>
<keyword id="KW-1185">Reference proteome</keyword>
<keyword id="KW-0732">Signal</keyword>
<dbReference type="EMBL" id="GL534935">
    <property type="protein sequence ID" value="EFQ91119.1"/>
    <property type="molecule type" value="Genomic_DNA"/>
</dbReference>
<dbReference type="RefSeq" id="XP_003300769.1">
    <property type="nucleotide sequence ID" value="XM_003300721.1"/>
</dbReference>
<dbReference type="STRING" id="861557.E3RT14"/>
<dbReference type="EnsemblFungi" id="EFQ91119">
    <property type="protein sequence ID" value="EFQ91119"/>
    <property type="gene ID" value="PTT_12117"/>
</dbReference>
<dbReference type="KEGG" id="pte:PTT_12117"/>
<dbReference type="eggNOG" id="ENOG502S416">
    <property type="taxonomic scope" value="Eukaryota"/>
</dbReference>
<dbReference type="HOGENOM" id="CLU_142363_0_0_1"/>
<dbReference type="OrthoDB" id="2234316at2759"/>
<dbReference type="Proteomes" id="UP000001067">
    <property type="component" value="Unassembled WGS sequence"/>
</dbReference>
<dbReference type="GO" id="GO:0036503">
    <property type="term" value="P:ERAD pathway"/>
    <property type="evidence" value="ECO:0007669"/>
    <property type="project" value="TreeGrafter"/>
</dbReference>
<dbReference type="CDD" id="cd23996">
    <property type="entry name" value="LCL2-like"/>
    <property type="match status" value="1"/>
</dbReference>
<dbReference type="InterPro" id="IPR034543">
    <property type="entry name" value="LCL2"/>
</dbReference>
<dbReference type="PANTHER" id="PTHR38425">
    <property type="entry name" value="LONG CHRONOLOGICAL LIFESPAN PROTEIN 2"/>
    <property type="match status" value="1"/>
</dbReference>
<dbReference type="PANTHER" id="PTHR38425:SF1">
    <property type="entry name" value="LONG CHRONOLOGICAL LIFESPAN PROTEIN 2"/>
    <property type="match status" value="1"/>
</dbReference>
<name>LCL2_PYRTT</name>
<protein>
    <recommendedName>
        <fullName>Long chronological lifespan protein 2</fullName>
    </recommendedName>
</protein>
<reference key="1">
    <citation type="journal article" date="2010" name="Genome Biol.">
        <title>A first genome assembly of the barley fungal pathogen Pyrenophora teres f. teres.</title>
        <authorList>
            <person name="Ellwood S.R."/>
            <person name="Liu Z."/>
            <person name="Syme R.A."/>
            <person name="Lai Z."/>
            <person name="Hane J.K."/>
            <person name="Keiper F."/>
            <person name="Moffat C.S."/>
            <person name="Oliver R.P."/>
            <person name="Friesen T.L."/>
        </authorList>
    </citation>
    <scope>NUCLEOTIDE SEQUENCE [LARGE SCALE GENOMIC DNA]</scope>
    <source>
        <strain>0-1</strain>
    </source>
</reference>
<gene>
    <name type="primary">lcl2</name>
    <name type="ORF">PTT_12117</name>
</gene>
<feature type="signal peptide" evidence="2">
    <location>
        <begin position="1"/>
        <end position="19"/>
    </location>
</feature>
<feature type="chain" id="PRO_0000408626" description="Long chronological lifespan protein 2">
    <location>
        <begin position="20"/>
        <end position="129"/>
    </location>
</feature>
<feature type="region of interest" description="Disordered" evidence="3">
    <location>
        <begin position="32"/>
        <end position="51"/>
    </location>
</feature>
<proteinExistence type="inferred from homology"/>
<comment type="function">
    <text evidence="1">Probable component of the endoplasmic reticulum-associated degradation (ERAD) pathway.</text>
</comment>
<comment type="similarity">
    <text evidence="4">Belongs to the LCL2 family.</text>
</comment>
<organism>
    <name type="scientific">Pyrenophora teres f. teres (strain 0-1)</name>
    <name type="common">Barley net blotch fungus</name>
    <name type="synonym">Drechslera teres f. teres</name>
    <dbReference type="NCBI Taxonomy" id="861557"/>
    <lineage>
        <taxon>Eukaryota</taxon>
        <taxon>Fungi</taxon>
        <taxon>Dikarya</taxon>
        <taxon>Ascomycota</taxon>
        <taxon>Pezizomycotina</taxon>
        <taxon>Dothideomycetes</taxon>
        <taxon>Pleosporomycetidae</taxon>
        <taxon>Pleosporales</taxon>
        <taxon>Pleosporineae</taxon>
        <taxon>Pleosporaceae</taxon>
        <taxon>Pyrenophora</taxon>
    </lineage>
</organism>